<protein>
    <recommendedName>
        <fullName evidence="1">Iron-sulfur cluster insertion protein ErpA</fullName>
    </recommendedName>
</protein>
<sequence>MSETAQSYDPTEDFQALVVTDSAAARVAQLIAQEESDDLKLRVFVSGGGCSGFQYGFTFDERIEEGDSVVEKDGVTFLVDPMSSQYLMGAEIDFVEGIEGEQFVIRNPNATTTCGCGSSFSI</sequence>
<evidence type="ECO:0000255" key="1">
    <source>
        <dbReference type="HAMAP-Rule" id="MF_01380"/>
    </source>
</evidence>
<feature type="chain" id="PRO_0000311443" description="Iron-sulfur cluster insertion protein ErpA">
    <location>
        <begin position="1"/>
        <end position="122"/>
    </location>
</feature>
<feature type="binding site" evidence="1">
    <location>
        <position position="50"/>
    </location>
    <ligand>
        <name>iron-sulfur cluster</name>
        <dbReference type="ChEBI" id="CHEBI:30408"/>
    </ligand>
</feature>
<feature type="binding site" evidence="1">
    <location>
        <position position="114"/>
    </location>
    <ligand>
        <name>iron-sulfur cluster</name>
        <dbReference type="ChEBI" id="CHEBI:30408"/>
    </ligand>
</feature>
<feature type="binding site" evidence="1">
    <location>
        <position position="116"/>
    </location>
    <ligand>
        <name>iron-sulfur cluster</name>
        <dbReference type="ChEBI" id="CHEBI:30408"/>
    </ligand>
</feature>
<reference key="1">
    <citation type="submission" date="2006-08" db="EMBL/GenBank/DDBJ databases">
        <title>Complete sequence of Alkalilimnicola ehrilichei MLHE-1.</title>
        <authorList>
            <person name="Copeland A."/>
            <person name="Lucas S."/>
            <person name="Lapidus A."/>
            <person name="Barry K."/>
            <person name="Detter J.C."/>
            <person name="Glavina del Rio T."/>
            <person name="Hammon N."/>
            <person name="Israni S."/>
            <person name="Dalin E."/>
            <person name="Tice H."/>
            <person name="Pitluck S."/>
            <person name="Sims D."/>
            <person name="Brettin T."/>
            <person name="Bruce D."/>
            <person name="Han C."/>
            <person name="Tapia R."/>
            <person name="Gilna P."/>
            <person name="Schmutz J."/>
            <person name="Larimer F."/>
            <person name="Land M."/>
            <person name="Hauser L."/>
            <person name="Kyrpides N."/>
            <person name="Mikhailova N."/>
            <person name="Oremland R.S."/>
            <person name="Hoeft S.E."/>
            <person name="Switzer-Blum J."/>
            <person name="Kulp T."/>
            <person name="King G."/>
            <person name="Tabita R."/>
            <person name="Witte B."/>
            <person name="Santini J.M."/>
            <person name="Basu P."/>
            <person name="Hollibaugh J.T."/>
            <person name="Xie G."/>
            <person name="Stolz J.F."/>
            <person name="Richardson P."/>
        </authorList>
    </citation>
    <scope>NUCLEOTIDE SEQUENCE [LARGE SCALE GENOMIC DNA]</scope>
    <source>
        <strain>ATCC BAA-1101 / DSM 17681 / MLHE-1</strain>
    </source>
</reference>
<name>ERPA_ALKEH</name>
<gene>
    <name evidence="1" type="primary">erpA</name>
    <name type="ordered locus">Mlg_0435</name>
</gene>
<comment type="function">
    <text evidence="1">Required for insertion of 4Fe-4S clusters for at least IspG.</text>
</comment>
<comment type="cofactor">
    <cofactor evidence="1">
        <name>iron-sulfur cluster</name>
        <dbReference type="ChEBI" id="CHEBI:30408"/>
    </cofactor>
    <text evidence="1">Binds 1 iron-sulfur cluster per subunit.</text>
</comment>
<comment type="subunit">
    <text evidence="1">Homodimer.</text>
</comment>
<comment type="similarity">
    <text evidence="1">Belongs to the HesB/IscA family.</text>
</comment>
<accession>Q0ABJ8</accession>
<dbReference type="EMBL" id="CP000453">
    <property type="protein sequence ID" value="ABI55789.1"/>
    <property type="molecule type" value="Genomic_DNA"/>
</dbReference>
<dbReference type="RefSeq" id="WP_011628185.1">
    <property type="nucleotide sequence ID" value="NC_008340.1"/>
</dbReference>
<dbReference type="SMR" id="Q0ABJ8"/>
<dbReference type="KEGG" id="aeh:Mlg_0435"/>
<dbReference type="eggNOG" id="COG0316">
    <property type="taxonomic scope" value="Bacteria"/>
</dbReference>
<dbReference type="HOGENOM" id="CLU_069054_5_3_6"/>
<dbReference type="OrthoDB" id="9801228at2"/>
<dbReference type="Proteomes" id="UP000001962">
    <property type="component" value="Chromosome"/>
</dbReference>
<dbReference type="GO" id="GO:0051537">
    <property type="term" value="F:2 iron, 2 sulfur cluster binding"/>
    <property type="evidence" value="ECO:0007669"/>
    <property type="project" value="UniProtKB-ARBA"/>
</dbReference>
<dbReference type="GO" id="GO:0051539">
    <property type="term" value="F:4 iron, 4 sulfur cluster binding"/>
    <property type="evidence" value="ECO:0007669"/>
    <property type="project" value="TreeGrafter"/>
</dbReference>
<dbReference type="GO" id="GO:0005506">
    <property type="term" value="F:iron ion binding"/>
    <property type="evidence" value="ECO:0007669"/>
    <property type="project" value="UniProtKB-UniRule"/>
</dbReference>
<dbReference type="GO" id="GO:0016226">
    <property type="term" value="P:iron-sulfur cluster assembly"/>
    <property type="evidence" value="ECO:0007669"/>
    <property type="project" value="UniProtKB-UniRule"/>
</dbReference>
<dbReference type="FunFam" id="2.60.300.12:FF:000002">
    <property type="entry name" value="Iron-sulfur cluster insertion protein ErpA"/>
    <property type="match status" value="1"/>
</dbReference>
<dbReference type="Gene3D" id="2.60.300.12">
    <property type="entry name" value="HesB-like domain"/>
    <property type="match status" value="1"/>
</dbReference>
<dbReference type="HAMAP" id="MF_01380">
    <property type="entry name" value="Fe_S_insert_ErpA"/>
    <property type="match status" value="1"/>
</dbReference>
<dbReference type="InterPro" id="IPR000361">
    <property type="entry name" value="FeS_biogenesis"/>
</dbReference>
<dbReference type="InterPro" id="IPR016092">
    <property type="entry name" value="FeS_cluster_insertion"/>
</dbReference>
<dbReference type="InterPro" id="IPR017870">
    <property type="entry name" value="FeS_cluster_insertion_CS"/>
</dbReference>
<dbReference type="InterPro" id="IPR023063">
    <property type="entry name" value="FeS_cluster_insertion_RrpA"/>
</dbReference>
<dbReference type="InterPro" id="IPR035903">
    <property type="entry name" value="HesB-like_dom_sf"/>
</dbReference>
<dbReference type="NCBIfam" id="TIGR00049">
    <property type="entry name" value="iron-sulfur cluster assembly accessory protein"/>
    <property type="match status" value="1"/>
</dbReference>
<dbReference type="NCBIfam" id="NF010147">
    <property type="entry name" value="PRK13623.1"/>
    <property type="match status" value="1"/>
</dbReference>
<dbReference type="PANTHER" id="PTHR43011">
    <property type="entry name" value="IRON-SULFUR CLUSTER ASSEMBLY 2 HOMOLOG, MITOCHONDRIAL"/>
    <property type="match status" value="1"/>
</dbReference>
<dbReference type="PANTHER" id="PTHR43011:SF1">
    <property type="entry name" value="IRON-SULFUR CLUSTER ASSEMBLY 2 HOMOLOG, MITOCHONDRIAL"/>
    <property type="match status" value="1"/>
</dbReference>
<dbReference type="Pfam" id="PF01521">
    <property type="entry name" value="Fe-S_biosyn"/>
    <property type="match status" value="1"/>
</dbReference>
<dbReference type="SUPFAM" id="SSF89360">
    <property type="entry name" value="HesB-like domain"/>
    <property type="match status" value="1"/>
</dbReference>
<dbReference type="PROSITE" id="PS01152">
    <property type="entry name" value="HESB"/>
    <property type="match status" value="1"/>
</dbReference>
<keyword id="KW-0408">Iron</keyword>
<keyword id="KW-0411">Iron-sulfur</keyword>
<keyword id="KW-0479">Metal-binding</keyword>
<keyword id="KW-1185">Reference proteome</keyword>
<proteinExistence type="inferred from homology"/>
<organism>
    <name type="scientific">Alkalilimnicola ehrlichii (strain ATCC BAA-1101 / DSM 17681 / MLHE-1)</name>
    <dbReference type="NCBI Taxonomy" id="187272"/>
    <lineage>
        <taxon>Bacteria</taxon>
        <taxon>Pseudomonadati</taxon>
        <taxon>Pseudomonadota</taxon>
        <taxon>Gammaproteobacteria</taxon>
        <taxon>Chromatiales</taxon>
        <taxon>Ectothiorhodospiraceae</taxon>
        <taxon>Alkalilimnicola</taxon>
    </lineage>
</organism>